<evidence type="ECO:0000250" key="1"/>
<evidence type="ECO:0000256" key="2">
    <source>
        <dbReference type="SAM" id="MobiDB-lite"/>
    </source>
</evidence>
<evidence type="ECO:0000305" key="3"/>
<reference key="1">
    <citation type="journal article" date="2007" name="Proc. Natl. Acad. Sci. U.S.A.">
        <title>Genome sequencing and comparative analysis of Saccharomyces cerevisiae strain YJM789.</title>
        <authorList>
            <person name="Wei W."/>
            <person name="McCusker J.H."/>
            <person name="Hyman R.W."/>
            <person name="Jones T."/>
            <person name="Ning Y."/>
            <person name="Cao Z."/>
            <person name="Gu Z."/>
            <person name="Bruno D."/>
            <person name="Miranda M."/>
            <person name="Nguyen M."/>
            <person name="Wilhelmy J."/>
            <person name="Komp C."/>
            <person name="Tamse R."/>
            <person name="Wang X."/>
            <person name="Jia P."/>
            <person name="Luedi P."/>
            <person name="Oefner P.J."/>
            <person name="David L."/>
            <person name="Dietrich F.S."/>
            <person name="Li Y."/>
            <person name="Davis R.W."/>
            <person name="Steinmetz L.M."/>
        </authorList>
    </citation>
    <scope>NUCLEOTIDE SEQUENCE [LARGE SCALE GENOMIC DNA]</scope>
    <source>
        <strain>YJM789</strain>
    </source>
</reference>
<accession>A6ZMG4</accession>
<sequence>MGSFWDAFAVYDKKKHADPSVYGGNHNNTGDSKTQVMFSKEYRQPRTHQQENLQSMRRSSIGSQDSSDVEDVKEGRLPAEVEIPKNVDISNMSQGEFLRLYESLRRGEPDNKVNR</sequence>
<comment type="function">
    <text evidence="1">Stationary phase-essential protein not required for growth on nonfermentable carbon sources.</text>
</comment>
<comment type="similarity">
    <text evidence="3">Belongs to the SPG4 family.</text>
</comment>
<organism>
    <name type="scientific">Saccharomyces cerevisiae (strain YJM789)</name>
    <name type="common">Baker's yeast</name>
    <dbReference type="NCBI Taxonomy" id="307796"/>
    <lineage>
        <taxon>Eukaryota</taxon>
        <taxon>Fungi</taxon>
        <taxon>Dikarya</taxon>
        <taxon>Ascomycota</taxon>
        <taxon>Saccharomycotina</taxon>
        <taxon>Saccharomycetes</taxon>
        <taxon>Saccharomycetales</taxon>
        <taxon>Saccharomycetaceae</taxon>
        <taxon>Saccharomyces</taxon>
    </lineage>
</organism>
<feature type="chain" id="PRO_0000405006" description="Stationary phase protein 4">
    <location>
        <begin position="1"/>
        <end position="115"/>
    </location>
</feature>
<feature type="region of interest" description="Disordered" evidence="2">
    <location>
        <begin position="16"/>
        <end position="77"/>
    </location>
</feature>
<feature type="compositionally biased region" description="Polar residues" evidence="2">
    <location>
        <begin position="25"/>
        <end position="37"/>
    </location>
</feature>
<feature type="compositionally biased region" description="Polar residues" evidence="2">
    <location>
        <begin position="50"/>
        <end position="66"/>
    </location>
</feature>
<protein>
    <recommendedName>
        <fullName>Stationary phase protein 4</fullName>
    </recommendedName>
</protein>
<gene>
    <name type="primary">SPG4</name>
    <name type="ORF">SCY_4276</name>
</gene>
<dbReference type="EMBL" id="AAFW02000020">
    <property type="protein sequence ID" value="EDN64494.1"/>
    <property type="molecule type" value="Genomic_DNA"/>
</dbReference>
<dbReference type="SMR" id="A6ZMG4"/>
<dbReference type="HOGENOM" id="CLU_2158879_0_0_1"/>
<dbReference type="Proteomes" id="UP000007060">
    <property type="component" value="Unassembled WGS sequence"/>
</dbReference>
<dbReference type="InterPro" id="IPR020485">
    <property type="entry name" value="Spg4"/>
</dbReference>
<dbReference type="Pfam" id="PF17325">
    <property type="entry name" value="SPG4"/>
    <property type="match status" value="1"/>
</dbReference>
<name>SPG4_YEAS7</name>
<proteinExistence type="inferred from homology"/>